<feature type="chain" id="PRO_0000156345" description="Inosine/xanthosine triphosphatase">
    <location>
        <begin position="1"/>
        <end position="174"/>
    </location>
</feature>
<feature type="binding site" evidence="1">
    <location>
        <begin position="68"/>
        <end position="69"/>
    </location>
    <ligand>
        <name>substrate</name>
    </ligand>
</feature>
<feature type="binding site" evidence="1">
    <location>
        <position position="68"/>
    </location>
    <ligand>
        <name>Mg(2+)</name>
        <dbReference type="ChEBI" id="CHEBI:18420"/>
    </ligand>
</feature>
<proteinExistence type="inferred from homology"/>
<organism>
    <name type="scientific">Photobacterium profundum (strain SS9)</name>
    <dbReference type="NCBI Taxonomy" id="298386"/>
    <lineage>
        <taxon>Bacteria</taxon>
        <taxon>Pseudomonadati</taxon>
        <taxon>Pseudomonadota</taxon>
        <taxon>Gammaproteobacteria</taxon>
        <taxon>Vibrionales</taxon>
        <taxon>Vibrionaceae</taxon>
        <taxon>Photobacterium</taxon>
    </lineage>
</organism>
<accession>Q6LUG1</accession>
<name>NCPP_PHOPR</name>
<evidence type="ECO:0000255" key="1">
    <source>
        <dbReference type="HAMAP-Rule" id="MF_00648"/>
    </source>
</evidence>
<keyword id="KW-0378">Hydrolase</keyword>
<keyword id="KW-0460">Magnesium</keyword>
<keyword id="KW-0464">Manganese</keyword>
<keyword id="KW-0479">Metal-binding</keyword>
<keyword id="KW-0546">Nucleotide metabolism</keyword>
<keyword id="KW-0547">Nucleotide-binding</keyword>
<keyword id="KW-1185">Reference proteome</keyword>
<comment type="function">
    <text evidence="1">Phosphatase that hydrolyzes non-canonical purine nucleotides such as XTP and ITP to their respective diphosphate derivatives. Probably excludes non-canonical purines from DNA/RNA precursor pool, thus preventing their incorporation into DNA/RNA and avoiding chromosomal lesions.</text>
</comment>
<comment type="catalytic activity">
    <reaction evidence="1">
        <text>XTP + H2O = XDP + phosphate + H(+)</text>
        <dbReference type="Rhea" id="RHEA:28406"/>
        <dbReference type="ChEBI" id="CHEBI:15377"/>
        <dbReference type="ChEBI" id="CHEBI:15378"/>
        <dbReference type="ChEBI" id="CHEBI:43474"/>
        <dbReference type="ChEBI" id="CHEBI:59884"/>
        <dbReference type="ChEBI" id="CHEBI:61314"/>
        <dbReference type="EC" id="3.6.1.73"/>
    </reaction>
</comment>
<comment type="catalytic activity">
    <reaction evidence="1">
        <text>ITP + H2O = IDP + phosphate + H(+)</text>
        <dbReference type="Rhea" id="RHEA:28330"/>
        <dbReference type="ChEBI" id="CHEBI:15377"/>
        <dbReference type="ChEBI" id="CHEBI:15378"/>
        <dbReference type="ChEBI" id="CHEBI:43474"/>
        <dbReference type="ChEBI" id="CHEBI:58280"/>
        <dbReference type="ChEBI" id="CHEBI:61402"/>
        <dbReference type="EC" id="3.6.1.73"/>
    </reaction>
</comment>
<comment type="cofactor">
    <cofactor evidence="1">
        <name>Mg(2+)</name>
        <dbReference type="ChEBI" id="CHEBI:18420"/>
    </cofactor>
    <cofactor evidence="1">
        <name>Mn(2+)</name>
        <dbReference type="ChEBI" id="CHEBI:29035"/>
    </cofactor>
    <text evidence="1">Binds 1 divalent metal cation per subunit; can use either Mg(2+) or Mn(2+).</text>
</comment>
<comment type="subunit">
    <text evidence="1">Homodimer.</text>
</comment>
<comment type="similarity">
    <text evidence="1">Belongs to the YjjX NTPase family.</text>
</comment>
<gene>
    <name type="ordered locus">PBPRA0643</name>
</gene>
<dbReference type="EC" id="3.6.1.73" evidence="1"/>
<dbReference type="EMBL" id="CR378665">
    <property type="protein sequence ID" value="CAG19064.1"/>
    <property type="molecule type" value="Genomic_DNA"/>
</dbReference>
<dbReference type="RefSeq" id="WP_011217412.1">
    <property type="nucleotide sequence ID" value="NC_006370.1"/>
</dbReference>
<dbReference type="SMR" id="Q6LUG1"/>
<dbReference type="STRING" id="298386.PBPRA0643"/>
<dbReference type="KEGG" id="ppr:PBPRA0643"/>
<dbReference type="eggNOG" id="COG1986">
    <property type="taxonomic scope" value="Bacteria"/>
</dbReference>
<dbReference type="HOGENOM" id="CLU_087417_1_0_6"/>
<dbReference type="Proteomes" id="UP000000593">
    <property type="component" value="Chromosome 1"/>
</dbReference>
<dbReference type="GO" id="GO:0103023">
    <property type="term" value="F:ITPase activity"/>
    <property type="evidence" value="ECO:0007669"/>
    <property type="project" value="UniProtKB-EC"/>
</dbReference>
<dbReference type="GO" id="GO:0046872">
    <property type="term" value="F:metal ion binding"/>
    <property type="evidence" value="ECO:0007669"/>
    <property type="project" value="UniProtKB-KW"/>
</dbReference>
<dbReference type="GO" id="GO:0000166">
    <property type="term" value="F:nucleotide binding"/>
    <property type="evidence" value="ECO:0007669"/>
    <property type="project" value="UniProtKB-KW"/>
</dbReference>
<dbReference type="GO" id="GO:0017111">
    <property type="term" value="F:ribonucleoside triphosphate phosphatase activity"/>
    <property type="evidence" value="ECO:0000250"/>
    <property type="project" value="UniProtKB"/>
</dbReference>
<dbReference type="GO" id="GO:0009117">
    <property type="term" value="P:nucleotide metabolic process"/>
    <property type="evidence" value="ECO:0007669"/>
    <property type="project" value="UniProtKB-KW"/>
</dbReference>
<dbReference type="GO" id="GO:0006772">
    <property type="term" value="P:thiamine metabolic process"/>
    <property type="evidence" value="ECO:0007669"/>
    <property type="project" value="TreeGrafter"/>
</dbReference>
<dbReference type="FunFam" id="3.90.950.10:FF:000002">
    <property type="entry name" value="Inosine/xanthosine triphosphatase"/>
    <property type="match status" value="1"/>
</dbReference>
<dbReference type="Gene3D" id="3.90.950.10">
    <property type="match status" value="1"/>
</dbReference>
<dbReference type="HAMAP" id="MF_00648">
    <property type="entry name" value="Non_canon_purine_NTPase_YjjX"/>
    <property type="match status" value="1"/>
</dbReference>
<dbReference type="InterPro" id="IPR029001">
    <property type="entry name" value="ITPase-like_fam"/>
</dbReference>
<dbReference type="InterPro" id="IPR002786">
    <property type="entry name" value="Non_canon_purine_NTPase"/>
</dbReference>
<dbReference type="InterPro" id="IPR026533">
    <property type="entry name" value="NTPase/PRRC1"/>
</dbReference>
<dbReference type="InterPro" id="IPR050299">
    <property type="entry name" value="YjjX_NTPase"/>
</dbReference>
<dbReference type="NCBIfam" id="TIGR00258">
    <property type="entry name" value="inosine/xanthosine triphosphatase"/>
    <property type="match status" value="1"/>
</dbReference>
<dbReference type="NCBIfam" id="NF003459">
    <property type="entry name" value="PRK05074.1"/>
    <property type="match status" value="1"/>
</dbReference>
<dbReference type="PANTHER" id="PTHR34699">
    <property type="match status" value="1"/>
</dbReference>
<dbReference type="PANTHER" id="PTHR34699:SF2">
    <property type="entry name" value="NON-CANONICAL PURINE NTP PHOSPHATASE_PRRC1 DOMAIN-CONTAINING PROTEIN"/>
    <property type="match status" value="1"/>
</dbReference>
<dbReference type="Pfam" id="PF01931">
    <property type="entry name" value="NTPase_I-T"/>
    <property type="match status" value="1"/>
</dbReference>
<dbReference type="SUPFAM" id="SSF52972">
    <property type="entry name" value="ITPase-like"/>
    <property type="match status" value="1"/>
</dbReference>
<reference key="1">
    <citation type="journal article" date="2005" name="Science">
        <title>Life at depth: Photobacterium profundum genome sequence and expression analysis.</title>
        <authorList>
            <person name="Vezzi A."/>
            <person name="Campanaro S."/>
            <person name="D'Angelo M."/>
            <person name="Simonato F."/>
            <person name="Vitulo N."/>
            <person name="Lauro F.M."/>
            <person name="Cestaro A."/>
            <person name="Malacrida G."/>
            <person name="Simionati B."/>
            <person name="Cannata N."/>
            <person name="Romualdi C."/>
            <person name="Bartlett D.H."/>
            <person name="Valle G."/>
        </authorList>
    </citation>
    <scope>NUCLEOTIDE SEQUENCE [LARGE SCALE GENOMIC DNA]</scope>
    <source>
        <strain>ATCC BAA-1253 / SS9</strain>
    </source>
</reference>
<protein>
    <recommendedName>
        <fullName evidence="1">Inosine/xanthosine triphosphatase</fullName>
        <shortName evidence="1">ITPase/XTPase</shortName>
        <ecNumber evidence="1">3.6.1.73</ecNumber>
    </recommendedName>
    <alternativeName>
        <fullName evidence="1">Non-canonical purine NTP phosphatase</fullName>
    </alternativeName>
    <alternativeName>
        <fullName evidence="1">Non-standard purine NTP phosphatase</fullName>
    </alternativeName>
    <alternativeName>
        <fullName evidence="1">Nucleoside-triphosphate phosphatase</fullName>
        <shortName evidence="1">NTPase</shortName>
    </alternativeName>
</protein>
<sequence>MSKIIVASANPAKISAVASAFSQAFPEQSFTVEGISVASEVRDQPLCADETLLGARNRVKNARKLQADADFYVGLEAGIDGGFTFAWMVIENHKQRGEARSASLPLPPIALEKIQQGIELGDVMDDMFNQQNVKQKGGAIAMLTNHTLSRSSVYQQALILALIPFMNEQWFPCR</sequence>